<protein>
    <recommendedName>
        <fullName evidence="1">Photosystem II reaction center protein K</fullName>
        <shortName evidence="1">PSII-K</shortName>
    </recommendedName>
</protein>
<accession>Q7U9L1</accession>
<sequence>MASFTLDLLAQLPEAYQAFSPLIDILPLIPVFFLLLAFVWQASVGFR</sequence>
<gene>
    <name evidence="1" type="primary">psbK</name>
    <name type="ordered locus">SYNW0243</name>
</gene>
<keyword id="KW-0472">Membrane</keyword>
<keyword id="KW-0602">Photosynthesis</keyword>
<keyword id="KW-0604">Photosystem II</keyword>
<keyword id="KW-0674">Reaction center</keyword>
<keyword id="KW-0793">Thylakoid</keyword>
<keyword id="KW-0812">Transmembrane</keyword>
<keyword id="KW-1133">Transmembrane helix</keyword>
<reference key="1">
    <citation type="journal article" date="2003" name="Nature">
        <title>The genome of a motile marine Synechococcus.</title>
        <authorList>
            <person name="Palenik B."/>
            <person name="Brahamsha B."/>
            <person name="Larimer F.W."/>
            <person name="Land M.L."/>
            <person name="Hauser L."/>
            <person name="Chain P."/>
            <person name="Lamerdin J.E."/>
            <person name="Regala W."/>
            <person name="Allen E.E."/>
            <person name="McCarren J."/>
            <person name="Paulsen I.T."/>
            <person name="Dufresne A."/>
            <person name="Partensky F."/>
            <person name="Webb E.A."/>
            <person name="Waterbury J."/>
        </authorList>
    </citation>
    <scope>NUCLEOTIDE SEQUENCE [LARGE SCALE GENOMIC DNA]</scope>
    <source>
        <strain>WH8102</strain>
    </source>
</reference>
<dbReference type="EMBL" id="BX569689">
    <property type="protein sequence ID" value="CAE06758.1"/>
    <property type="molecule type" value="Genomic_DNA"/>
</dbReference>
<dbReference type="RefSeq" id="WP_011127119.1">
    <property type="nucleotide sequence ID" value="NC_005070.1"/>
</dbReference>
<dbReference type="SMR" id="Q7U9L1"/>
<dbReference type="STRING" id="84588.SYNW0243"/>
<dbReference type="KEGG" id="syw:SYNW0243"/>
<dbReference type="eggNOG" id="ENOG5032YQR">
    <property type="taxonomic scope" value="Bacteria"/>
</dbReference>
<dbReference type="HOGENOM" id="CLU_174355_0_0_3"/>
<dbReference type="BioCyc" id="MetaCyc:TX72_RS01210-MONOMER"/>
<dbReference type="Proteomes" id="UP000001422">
    <property type="component" value="Chromosome"/>
</dbReference>
<dbReference type="GO" id="GO:0009539">
    <property type="term" value="C:photosystem II reaction center"/>
    <property type="evidence" value="ECO:0007669"/>
    <property type="project" value="InterPro"/>
</dbReference>
<dbReference type="GO" id="GO:0031676">
    <property type="term" value="C:plasma membrane-derived thylakoid membrane"/>
    <property type="evidence" value="ECO:0007669"/>
    <property type="project" value="UniProtKB-SubCell"/>
</dbReference>
<dbReference type="GO" id="GO:0015979">
    <property type="term" value="P:photosynthesis"/>
    <property type="evidence" value="ECO:0007669"/>
    <property type="project" value="UniProtKB-UniRule"/>
</dbReference>
<dbReference type="HAMAP" id="MF_00441">
    <property type="entry name" value="PSII_PsbK"/>
    <property type="match status" value="1"/>
</dbReference>
<dbReference type="InterPro" id="IPR003687">
    <property type="entry name" value="PSII_PsbK"/>
</dbReference>
<dbReference type="InterPro" id="IPR037270">
    <property type="entry name" value="PSII_PsbK_sf"/>
</dbReference>
<dbReference type="NCBIfam" id="NF002715">
    <property type="entry name" value="PRK02553.1"/>
    <property type="match status" value="1"/>
</dbReference>
<dbReference type="PANTHER" id="PTHR35325">
    <property type="match status" value="1"/>
</dbReference>
<dbReference type="PANTHER" id="PTHR35325:SF1">
    <property type="entry name" value="PHOTOSYSTEM II REACTION CENTER PROTEIN K"/>
    <property type="match status" value="1"/>
</dbReference>
<dbReference type="Pfam" id="PF02533">
    <property type="entry name" value="PsbK"/>
    <property type="match status" value="1"/>
</dbReference>
<dbReference type="SUPFAM" id="SSF161037">
    <property type="entry name" value="Photosystem II reaction center protein K, PsbK"/>
    <property type="match status" value="1"/>
</dbReference>
<organism>
    <name type="scientific">Parasynechococcus marenigrum (strain WH8102)</name>
    <dbReference type="NCBI Taxonomy" id="84588"/>
    <lineage>
        <taxon>Bacteria</taxon>
        <taxon>Bacillati</taxon>
        <taxon>Cyanobacteriota</taxon>
        <taxon>Cyanophyceae</taxon>
        <taxon>Synechococcales</taxon>
        <taxon>Prochlorococcaceae</taxon>
        <taxon>Parasynechococcus</taxon>
        <taxon>Parasynechococcus marenigrum</taxon>
    </lineage>
</organism>
<evidence type="ECO:0000255" key="1">
    <source>
        <dbReference type="HAMAP-Rule" id="MF_00441"/>
    </source>
</evidence>
<feature type="propeptide" id="PRO_0000029549" evidence="1">
    <location>
        <begin position="1"/>
        <end position="10"/>
    </location>
</feature>
<feature type="chain" id="PRO_0000029550" description="Photosystem II reaction center protein K" evidence="1">
    <location>
        <begin position="11"/>
        <end position="47"/>
    </location>
</feature>
<feature type="transmembrane region" description="Helical" evidence="1">
    <location>
        <begin position="19"/>
        <end position="39"/>
    </location>
</feature>
<name>PSBK_PARMW</name>
<proteinExistence type="inferred from homology"/>
<comment type="function">
    <text evidence="1">One of the components of the core complex of photosystem II (PSII). PSII is a light-driven water:plastoquinone oxidoreductase that uses light energy to abstract electrons from H(2)O, generating O(2) and a proton gradient subsequently used for ATP formation. It consists of a core antenna complex that captures photons, and an electron transfer chain that converts photonic excitation into a charge separation.</text>
</comment>
<comment type="subunit">
    <text evidence="1">PSII is composed of 1 copy each of membrane proteins PsbA, PsbB, PsbC, PsbD, PsbE, PsbF, PsbH, PsbI, PsbJ, PsbK, PsbL, PsbM, PsbT, PsbX, PsbY, PsbZ, Psb30/Ycf12, peripheral proteins PsbO, CyanoQ (PsbQ), PsbU, PsbV and a large number of cofactors. It forms dimeric complexes.</text>
</comment>
<comment type="subcellular location">
    <subcellularLocation>
        <location evidence="1">Cellular thylakoid membrane</location>
        <topology evidence="1">Single-pass membrane protein</topology>
    </subcellularLocation>
</comment>
<comment type="similarity">
    <text evidence="1">Belongs to the PsbK family.</text>
</comment>